<comment type="function">
    <text evidence="1">Transaldolase is important for the balance of metabolites in the pentose-phosphate pathway.</text>
</comment>
<comment type="catalytic activity">
    <reaction evidence="1">
        <text>D-sedoheptulose 7-phosphate + D-glyceraldehyde 3-phosphate = D-erythrose 4-phosphate + beta-D-fructose 6-phosphate</text>
        <dbReference type="Rhea" id="RHEA:17053"/>
        <dbReference type="ChEBI" id="CHEBI:16897"/>
        <dbReference type="ChEBI" id="CHEBI:57483"/>
        <dbReference type="ChEBI" id="CHEBI:57634"/>
        <dbReference type="ChEBI" id="CHEBI:59776"/>
        <dbReference type="EC" id="2.2.1.2"/>
    </reaction>
</comment>
<comment type="pathway">
    <text evidence="1">Carbohydrate degradation; pentose phosphate pathway; D-glyceraldehyde 3-phosphate and beta-D-fructose 6-phosphate from D-ribose 5-phosphate and D-xylulose 5-phosphate (non-oxidative stage): step 2/3.</text>
</comment>
<comment type="subcellular location">
    <subcellularLocation>
        <location evidence="1">Cytoplasm</location>
    </subcellularLocation>
</comment>
<comment type="similarity">
    <text evidence="1 3">Belongs to the transaldolase family. Type 1 subfamily.</text>
</comment>
<name>TAL_PROMM</name>
<protein>
    <recommendedName>
        <fullName evidence="1">Transaldolase</fullName>
        <ecNumber evidence="1">2.2.1.2</ecNumber>
    </recommendedName>
</protein>
<organism>
    <name type="scientific">Prochlorococcus marinus (strain MIT 9313)</name>
    <dbReference type="NCBI Taxonomy" id="74547"/>
    <lineage>
        <taxon>Bacteria</taxon>
        <taxon>Bacillati</taxon>
        <taxon>Cyanobacteriota</taxon>
        <taxon>Cyanophyceae</taxon>
        <taxon>Synechococcales</taxon>
        <taxon>Prochlorococcaceae</taxon>
        <taxon>Prochlorococcus</taxon>
    </lineage>
</organism>
<proteinExistence type="inferred from homology"/>
<reference key="1">
    <citation type="journal article" date="2003" name="Nature">
        <title>Genome divergence in two Prochlorococcus ecotypes reflects oceanic niche differentiation.</title>
        <authorList>
            <person name="Rocap G."/>
            <person name="Larimer F.W."/>
            <person name="Lamerdin J.E."/>
            <person name="Malfatti S."/>
            <person name="Chain P."/>
            <person name="Ahlgren N.A."/>
            <person name="Arellano A."/>
            <person name="Coleman M."/>
            <person name="Hauser L."/>
            <person name="Hess W.R."/>
            <person name="Johnson Z.I."/>
            <person name="Land M.L."/>
            <person name="Lindell D."/>
            <person name="Post A.F."/>
            <person name="Regala W."/>
            <person name="Shah M."/>
            <person name="Shaw S.L."/>
            <person name="Steglich C."/>
            <person name="Sullivan M.B."/>
            <person name="Ting C.S."/>
            <person name="Tolonen A."/>
            <person name="Webb E.A."/>
            <person name="Zinser E.R."/>
            <person name="Chisholm S.W."/>
        </authorList>
    </citation>
    <scope>NUCLEOTIDE SEQUENCE [LARGE SCALE GENOMIC DNA]</scope>
    <source>
        <strain>MIT 9313</strain>
    </source>
</reference>
<evidence type="ECO:0000255" key="1">
    <source>
        <dbReference type="HAMAP-Rule" id="MF_00492"/>
    </source>
</evidence>
<evidence type="ECO:0000255" key="2">
    <source>
        <dbReference type="PROSITE-ProRule" id="PRU10142"/>
    </source>
</evidence>
<evidence type="ECO:0000305" key="3"/>
<feature type="chain" id="PRO_0000173605" description="Transaldolase">
    <location>
        <begin position="1"/>
        <end position="390"/>
    </location>
</feature>
<feature type="domain" description="EF-hand 1">
    <location>
        <begin position="329"/>
        <end position="364"/>
    </location>
</feature>
<feature type="domain" description="EF-hand 2">
    <location>
        <begin position="365"/>
        <end position="388"/>
    </location>
</feature>
<feature type="active site" description="Schiff-base intermediate with substrate" evidence="1">
    <location>
        <position position="135"/>
    </location>
</feature>
<feature type="binding site" evidence="2">
    <location>
        <position position="342"/>
    </location>
    <ligand>
        <name>Ca(2+)</name>
        <dbReference type="ChEBI" id="CHEBI:29108"/>
        <label>1</label>
    </ligand>
</feature>
<feature type="binding site" evidence="2">
    <location>
        <position position="344"/>
    </location>
    <ligand>
        <name>Ca(2+)</name>
        <dbReference type="ChEBI" id="CHEBI:29108"/>
        <label>1</label>
    </ligand>
</feature>
<feature type="binding site" evidence="2">
    <location>
        <position position="346"/>
    </location>
    <ligand>
        <name>Ca(2+)</name>
        <dbReference type="ChEBI" id="CHEBI:29108"/>
        <label>1</label>
    </ligand>
</feature>
<feature type="binding site" evidence="2">
    <location>
        <position position="348"/>
    </location>
    <ligand>
        <name>Ca(2+)</name>
        <dbReference type="ChEBI" id="CHEBI:29108"/>
        <label>1</label>
    </ligand>
</feature>
<feature type="binding site" evidence="2">
    <location>
        <position position="353"/>
    </location>
    <ligand>
        <name>Ca(2+)</name>
        <dbReference type="ChEBI" id="CHEBI:29108"/>
        <label>1</label>
    </ligand>
</feature>
<feature type="binding site" evidence="3">
    <location>
        <position position="365"/>
    </location>
    <ligand>
        <name>Ca(2+)</name>
        <dbReference type="ChEBI" id="CHEBI:29108"/>
        <label>2</label>
    </ligand>
</feature>
<feature type="binding site" evidence="3">
    <location>
        <position position="367"/>
    </location>
    <ligand>
        <name>Ca(2+)</name>
        <dbReference type="ChEBI" id="CHEBI:29108"/>
        <label>2</label>
    </ligand>
</feature>
<feature type="binding site" evidence="3">
    <location>
        <position position="369"/>
    </location>
    <ligand>
        <name>Ca(2+)</name>
        <dbReference type="ChEBI" id="CHEBI:29108"/>
        <label>2</label>
    </ligand>
</feature>
<feature type="binding site" evidence="3">
    <location>
        <position position="371"/>
    </location>
    <ligand>
        <name>Ca(2+)</name>
        <dbReference type="ChEBI" id="CHEBI:29108"/>
        <label>2</label>
    </ligand>
</feature>
<feature type="binding site" evidence="3">
    <location>
        <position position="376"/>
    </location>
    <ligand>
        <name>Ca(2+)</name>
        <dbReference type="ChEBI" id="CHEBI:29108"/>
        <label>2</label>
    </ligand>
</feature>
<sequence>MATLLEQLSTMTVVVADTGDLDAIRKFTPRDATTNPSLILAAAQIPAYQSLIDEALHSSRQLLGNSAAVEEVVHEALDEICVIFGKEILKIVPGRVSTEVDARLSFNTEATIAKAHKLIGLYNDAGITNDRVLIKIASTWEGIKAAEVLEKDGIHCNLTLLFGFSQAVACAEAGVTLISPFVGRILDWYKASTGRDSYAGPEDPGVISVTKIFNYFKTYDYKTEIMGASFRNLDEIIELAGCDLLTISPKLLDQLGSTEAPLKRKLDAVNPVAAESQIHVDKESFESMMRADRMAFEKLDEGIRGFSKAIETLEAQLAHRLAVLEGGAAFCHVVQEIFMLNDLDGDGCITREEWLGSDAVFDALDHDHDGRLLQEDVRSGLGAALALTTA</sequence>
<gene>
    <name evidence="1" type="primary">tal</name>
    <name type="ordered locus">PMT_1248</name>
</gene>
<accession>Q7V6B8</accession>
<keyword id="KW-0106">Calcium</keyword>
<keyword id="KW-0963">Cytoplasm</keyword>
<keyword id="KW-0479">Metal-binding</keyword>
<keyword id="KW-0570">Pentose shunt</keyword>
<keyword id="KW-1185">Reference proteome</keyword>
<keyword id="KW-0677">Repeat</keyword>
<keyword id="KW-0704">Schiff base</keyword>
<keyword id="KW-0808">Transferase</keyword>
<dbReference type="EC" id="2.2.1.2" evidence="1"/>
<dbReference type="EMBL" id="BX548175">
    <property type="protein sequence ID" value="CAE21423.1"/>
    <property type="molecule type" value="Genomic_DNA"/>
</dbReference>
<dbReference type="RefSeq" id="WP_011130617.1">
    <property type="nucleotide sequence ID" value="NC_005071.1"/>
</dbReference>
<dbReference type="SMR" id="Q7V6B8"/>
<dbReference type="KEGG" id="pmt:PMT_1248"/>
<dbReference type="eggNOG" id="COG0176">
    <property type="taxonomic scope" value="Bacteria"/>
</dbReference>
<dbReference type="HOGENOM" id="CLU_047470_0_1_3"/>
<dbReference type="OrthoDB" id="9807051at2"/>
<dbReference type="UniPathway" id="UPA00115">
    <property type="reaction ID" value="UER00414"/>
</dbReference>
<dbReference type="Proteomes" id="UP000001423">
    <property type="component" value="Chromosome"/>
</dbReference>
<dbReference type="GO" id="GO:0005737">
    <property type="term" value="C:cytoplasm"/>
    <property type="evidence" value="ECO:0007669"/>
    <property type="project" value="UniProtKB-SubCell"/>
</dbReference>
<dbReference type="GO" id="GO:0005509">
    <property type="term" value="F:calcium ion binding"/>
    <property type="evidence" value="ECO:0007669"/>
    <property type="project" value="InterPro"/>
</dbReference>
<dbReference type="GO" id="GO:0004801">
    <property type="term" value="F:transaldolase activity"/>
    <property type="evidence" value="ECO:0000250"/>
    <property type="project" value="UniProtKB"/>
</dbReference>
<dbReference type="GO" id="GO:0005975">
    <property type="term" value="P:carbohydrate metabolic process"/>
    <property type="evidence" value="ECO:0007669"/>
    <property type="project" value="InterPro"/>
</dbReference>
<dbReference type="GO" id="GO:0006098">
    <property type="term" value="P:pentose-phosphate shunt"/>
    <property type="evidence" value="ECO:0007669"/>
    <property type="project" value="UniProtKB-UniRule"/>
</dbReference>
<dbReference type="CDD" id="cd00957">
    <property type="entry name" value="Transaldolase_TalAB"/>
    <property type="match status" value="1"/>
</dbReference>
<dbReference type="FunFam" id="3.20.20.70:FF:000002">
    <property type="entry name" value="Transaldolase"/>
    <property type="match status" value="1"/>
</dbReference>
<dbReference type="Gene3D" id="3.20.20.70">
    <property type="entry name" value="Aldolase class I"/>
    <property type="match status" value="1"/>
</dbReference>
<dbReference type="HAMAP" id="MF_00492">
    <property type="entry name" value="Transaldolase_1"/>
    <property type="match status" value="1"/>
</dbReference>
<dbReference type="InterPro" id="IPR013785">
    <property type="entry name" value="Aldolase_TIM"/>
</dbReference>
<dbReference type="InterPro" id="IPR011992">
    <property type="entry name" value="EF-hand-dom_pair"/>
</dbReference>
<dbReference type="InterPro" id="IPR018247">
    <property type="entry name" value="EF_Hand_1_Ca_BS"/>
</dbReference>
<dbReference type="InterPro" id="IPR002048">
    <property type="entry name" value="EF_hand_dom"/>
</dbReference>
<dbReference type="InterPro" id="IPR001585">
    <property type="entry name" value="TAL/FSA"/>
</dbReference>
<dbReference type="InterPro" id="IPR004730">
    <property type="entry name" value="Transaldolase_1"/>
</dbReference>
<dbReference type="InterPro" id="IPR018225">
    <property type="entry name" value="Transaldolase_AS"/>
</dbReference>
<dbReference type="NCBIfam" id="NF008965">
    <property type="entry name" value="PRK12309.1"/>
    <property type="match status" value="1"/>
</dbReference>
<dbReference type="NCBIfam" id="TIGR00874">
    <property type="entry name" value="talAB"/>
    <property type="match status" value="1"/>
</dbReference>
<dbReference type="PANTHER" id="PTHR10683">
    <property type="entry name" value="TRANSALDOLASE"/>
    <property type="match status" value="1"/>
</dbReference>
<dbReference type="PANTHER" id="PTHR10683:SF18">
    <property type="entry name" value="TRANSALDOLASE"/>
    <property type="match status" value="1"/>
</dbReference>
<dbReference type="Pfam" id="PF00923">
    <property type="entry name" value="TAL_FSA"/>
    <property type="match status" value="1"/>
</dbReference>
<dbReference type="SUPFAM" id="SSF51569">
    <property type="entry name" value="Aldolase"/>
    <property type="match status" value="1"/>
</dbReference>
<dbReference type="SUPFAM" id="SSF47473">
    <property type="entry name" value="EF-hand"/>
    <property type="match status" value="1"/>
</dbReference>
<dbReference type="PROSITE" id="PS00018">
    <property type="entry name" value="EF_HAND_1"/>
    <property type="match status" value="1"/>
</dbReference>
<dbReference type="PROSITE" id="PS50222">
    <property type="entry name" value="EF_HAND_2"/>
    <property type="match status" value="1"/>
</dbReference>
<dbReference type="PROSITE" id="PS01054">
    <property type="entry name" value="TRANSALDOLASE_1"/>
    <property type="match status" value="1"/>
</dbReference>
<dbReference type="PROSITE" id="PS00958">
    <property type="entry name" value="TRANSALDOLASE_2"/>
    <property type="match status" value="1"/>
</dbReference>